<dbReference type="EC" id="1.-.-.-"/>
<dbReference type="EMBL" id="L42023">
    <property type="protein sequence ID" value="AAC23192.1"/>
    <property type="molecule type" value="Genomic_DNA"/>
</dbReference>
<dbReference type="PIR" id="D64172">
    <property type="entry name" value="D64172"/>
</dbReference>
<dbReference type="RefSeq" id="NP_439691.1">
    <property type="nucleotide sequence ID" value="NC_000907.1"/>
</dbReference>
<dbReference type="SMR" id="P45244"/>
<dbReference type="STRING" id="71421.HI_1542"/>
<dbReference type="DNASU" id="950405"/>
<dbReference type="EnsemblBacteria" id="AAC23192">
    <property type="protein sequence ID" value="AAC23192"/>
    <property type="gene ID" value="HI_1542"/>
</dbReference>
<dbReference type="KEGG" id="hin:HI_1542"/>
<dbReference type="PATRIC" id="fig|71421.8.peg.1613"/>
<dbReference type="eggNOG" id="COG0778">
    <property type="taxonomic scope" value="Bacteria"/>
</dbReference>
<dbReference type="HOGENOM" id="CLU_070764_5_0_6"/>
<dbReference type="OrthoDB" id="9804207at2"/>
<dbReference type="PhylomeDB" id="P45244"/>
<dbReference type="BioCyc" id="HINF71421:G1GJ1-1562-MONOMER"/>
<dbReference type="Proteomes" id="UP000000579">
    <property type="component" value="Chromosome"/>
</dbReference>
<dbReference type="GO" id="GO:0016491">
    <property type="term" value="F:oxidoreductase activity"/>
    <property type="evidence" value="ECO:0007669"/>
    <property type="project" value="UniProtKB-KW"/>
</dbReference>
<dbReference type="CDD" id="cd02135">
    <property type="entry name" value="YdjA-like"/>
    <property type="match status" value="1"/>
</dbReference>
<dbReference type="Gene3D" id="3.40.109.10">
    <property type="entry name" value="NADH Oxidase"/>
    <property type="match status" value="1"/>
</dbReference>
<dbReference type="InterPro" id="IPR052530">
    <property type="entry name" value="NAD(P)H_nitroreductase"/>
</dbReference>
<dbReference type="InterPro" id="IPR029479">
    <property type="entry name" value="Nitroreductase"/>
</dbReference>
<dbReference type="InterPro" id="IPR000415">
    <property type="entry name" value="Nitroreductase-like"/>
</dbReference>
<dbReference type="InterPro" id="IPR026021">
    <property type="entry name" value="YdjA-like"/>
</dbReference>
<dbReference type="NCBIfam" id="NF008088">
    <property type="entry name" value="PRK10828.1"/>
    <property type="match status" value="1"/>
</dbReference>
<dbReference type="PANTHER" id="PTHR43821">
    <property type="entry name" value="NAD(P)H NITROREDUCTASE YDJA-RELATED"/>
    <property type="match status" value="1"/>
</dbReference>
<dbReference type="PANTHER" id="PTHR43821:SF1">
    <property type="entry name" value="NAD(P)H NITROREDUCTASE YDJA-RELATED"/>
    <property type="match status" value="1"/>
</dbReference>
<dbReference type="Pfam" id="PF00881">
    <property type="entry name" value="Nitroreductase"/>
    <property type="match status" value="1"/>
</dbReference>
<dbReference type="PIRSF" id="PIRSF000232">
    <property type="entry name" value="YdjA"/>
    <property type="match status" value="1"/>
</dbReference>
<dbReference type="SUPFAM" id="SSF55469">
    <property type="entry name" value="FMN-dependent nitroreductase-like"/>
    <property type="match status" value="1"/>
</dbReference>
<protein>
    <recommendedName>
        <fullName>Putative NAD(P)H nitroreductase HI_1542</fullName>
        <ecNumber>1.-.-.-</ecNumber>
    </recommendedName>
</protein>
<evidence type="ECO:0000250" key="1"/>
<evidence type="ECO:0000255" key="2"/>
<evidence type="ECO:0000305" key="3"/>
<feature type="chain" id="PRO_0000169004" description="Putative NAD(P)H nitroreductase HI_1542">
    <location>
        <begin position="1"/>
        <end position="184"/>
    </location>
</feature>
<feature type="binding site" description="in other chain" evidence="1">
    <location>
        <begin position="10"/>
        <end position="12"/>
    </location>
    <ligand>
        <name>FMN</name>
        <dbReference type="ChEBI" id="CHEBI:58210"/>
        <note>ligand shared between dimeric partners</note>
    </ligand>
</feature>
<feature type="binding site" evidence="1">
    <location>
        <position position="35"/>
    </location>
    <ligand>
        <name>FMN</name>
        <dbReference type="ChEBI" id="CHEBI:58210"/>
        <note>ligand shared between dimeric partners</note>
    </ligand>
</feature>
<feature type="binding site" evidence="1">
    <location>
        <position position="39"/>
    </location>
    <ligand>
        <name>FMN</name>
        <dbReference type="ChEBI" id="CHEBI:58210"/>
        <note>ligand shared between dimeric partners</note>
    </ligand>
</feature>
<feature type="binding site" evidence="2">
    <location>
        <begin position="122"/>
        <end position="127"/>
    </location>
    <ligand>
        <name>NAD(+)</name>
        <dbReference type="ChEBI" id="CHEBI:57540"/>
    </ligand>
</feature>
<feature type="binding site" description="in other chain" evidence="1">
    <location>
        <begin position="132"/>
        <end position="134"/>
    </location>
    <ligand>
        <name>FMN</name>
        <dbReference type="ChEBI" id="CHEBI:58210"/>
        <note>ligand shared between dimeric partners</note>
    </ligand>
</feature>
<reference key="1">
    <citation type="journal article" date="1995" name="Science">
        <title>Whole-genome random sequencing and assembly of Haemophilus influenzae Rd.</title>
        <authorList>
            <person name="Fleischmann R.D."/>
            <person name="Adams M.D."/>
            <person name="White O."/>
            <person name="Clayton R.A."/>
            <person name="Kirkness E.F."/>
            <person name="Kerlavage A.R."/>
            <person name="Bult C.J."/>
            <person name="Tomb J.-F."/>
            <person name="Dougherty B.A."/>
            <person name="Merrick J.M."/>
            <person name="McKenney K."/>
            <person name="Sutton G.G."/>
            <person name="FitzHugh W."/>
            <person name="Fields C.A."/>
            <person name="Gocayne J.D."/>
            <person name="Scott J.D."/>
            <person name="Shirley R."/>
            <person name="Liu L.-I."/>
            <person name="Glodek A."/>
            <person name="Kelley J.M."/>
            <person name="Weidman J.F."/>
            <person name="Phillips C.A."/>
            <person name="Spriggs T."/>
            <person name="Hedblom E."/>
            <person name="Cotton M.D."/>
            <person name="Utterback T.R."/>
            <person name="Hanna M.C."/>
            <person name="Nguyen D.T."/>
            <person name="Saudek D.M."/>
            <person name="Brandon R.C."/>
            <person name="Fine L.D."/>
            <person name="Fritchman J.L."/>
            <person name="Fuhrmann J.L."/>
            <person name="Geoghagen N.S.M."/>
            <person name="Gnehm C.L."/>
            <person name="McDonald L.A."/>
            <person name="Small K.V."/>
            <person name="Fraser C.M."/>
            <person name="Smith H.O."/>
            <person name="Venter J.C."/>
        </authorList>
    </citation>
    <scope>NUCLEOTIDE SEQUENCE [LARGE SCALE GENOMIC DNA]</scope>
    <source>
        <strain>ATCC 51907 / DSM 11121 / KW20 / Rd</strain>
    </source>
</reference>
<sequence>MDALTLLTTRKSNKKLTAPAPNAEQLERIFEAAMRAPDHGKLHPYHFIVMENESLNKLETLLKAAVVEFDLGEEKLMKAENLAHRAPMVIGVVAKIDPTIAKVPGWEQMLSAGCATYGLQLAAQAQGFDNVWISGKWVNGTALREAFGCREQDRVIALVMIGTGMEKAERECRVIDTKDFVTYL</sequence>
<organism>
    <name type="scientific">Haemophilus influenzae (strain ATCC 51907 / DSM 11121 / KW20 / Rd)</name>
    <dbReference type="NCBI Taxonomy" id="71421"/>
    <lineage>
        <taxon>Bacteria</taxon>
        <taxon>Pseudomonadati</taxon>
        <taxon>Pseudomonadota</taxon>
        <taxon>Gammaproteobacteria</taxon>
        <taxon>Pasteurellales</taxon>
        <taxon>Pasteurellaceae</taxon>
        <taxon>Haemophilus</taxon>
    </lineage>
</organism>
<keyword id="KW-0285">Flavoprotein</keyword>
<keyword id="KW-0288">FMN</keyword>
<keyword id="KW-0520">NAD</keyword>
<keyword id="KW-0521">NADP</keyword>
<keyword id="KW-0560">Oxidoreductase</keyword>
<keyword id="KW-1185">Reference proteome</keyword>
<name>Y1542_HAEIN</name>
<comment type="cofactor">
    <cofactor evidence="1">
        <name>FMN</name>
        <dbReference type="ChEBI" id="CHEBI:58210"/>
    </cofactor>
    <text evidence="1">Binds 1 FMN per subunit.</text>
</comment>
<comment type="subunit">
    <text evidence="1">Homodimer.</text>
</comment>
<comment type="similarity">
    <text evidence="3">Belongs to the nitroreductase family.</text>
</comment>
<accession>P45244</accession>
<proteinExistence type="inferred from homology"/>
<gene>
    <name type="ordered locus">HI_1542</name>
</gene>